<dbReference type="EMBL" id="FO081048">
    <property type="protein sequence ID" value="CCD68803.1"/>
    <property type="molecule type" value="Genomic_DNA"/>
</dbReference>
<dbReference type="PIR" id="T16433">
    <property type="entry name" value="T16433"/>
</dbReference>
<dbReference type="RefSeq" id="NP_509471.2">
    <property type="nucleotide sequence ID" value="NM_077070.4"/>
</dbReference>
<dbReference type="FunCoup" id="Q20687">
    <property type="interactions" value="3"/>
</dbReference>
<dbReference type="STRING" id="6239.F53A9.4.1"/>
<dbReference type="TCDB" id="8.A.121.1.5">
    <property type="family name" value="the transmembrane protein 237 (tmem237) family"/>
</dbReference>
<dbReference type="PaxDb" id="6239-F53A9.4"/>
<dbReference type="EnsemblMetazoa" id="F53A9.4.1">
    <property type="protein sequence ID" value="F53A9.4.1"/>
    <property type="gene ID" value="WBGene00018727"/>
</dbReference>
<dbReference type="GeneID" id="181116"/>
<dbReference type="KEGG" id="cel:CELE_F53A9.4"/>
<dbReference type="UCSC" id="F53A9.4">
    <property type="organism name" value="c. elegans"/>
</dbReference>
<dbReference type="AGR" id="WB:WBGene00018727"/>
<dbReference type="CTD" id="181116"/>
<dbReference type="WormBase" id="F53A9.4">
    <property type="protein sequence ID" value="CE30141"/>
    <property type="gene ID" value="WBGene00018727"/>
    <property type="gene designation" value="jbts-14"/>
</dbReference>
<dbReference type="eggNOG" id="ENOG502SDR2">
    <property type="taxonomic scope" value="Eukaryota"/>
</dbReference>
<dbReference type="HOGENOM" id="CLU_691244_0_0_1"/>
<dbReference type="InParanoid" id="Q20687"/>
<dbReference type="OMA" id="CIQLESQ"/>
<dbReference type="OrthoDB" id="550113at2759"/>
<dbReference type="PhylomeDB" id="Q20687"/>
<dbReference type="PRO" id="PR:Q20687"/>
<dbReference type="Proteomes" id="UP000001940">
    <property type="component" value="Chromosome X"/>
</dbReference>
<dbReference type="Bgee" id="WBGene00018727">
    <property type="expression patterns" value="Expressed in pharyngeal muscle cell (C elegans) and 3 other cell types or tissues"/>
</dbReference>
<dbReference type="GO" id="GO:0036064">
    <property type="term" value="C:ciliary basal body"/>
    <property type="evidence" value="ECO:0000314"/>
    <property type="project" value="UniProtKB"/>
</dbReference>
<dbReference type="GO" id="GO:0035869">
    <property type="term" value="C:ciliary transition zone"/>
    <property type="evidence" value="ECO:0000314"/>
    <property type="project" value="UniProtKB"/>
</dbReference>
<dbReference type="GO" id="GO:0016020">
    <property type="term" value="C:membrane"/>
    <property type="evidence" value="ECO:0007669"/>
    <property type="project" value="UniProtKB-SubCell"/>
</dbReference>
<dbReference type="GO" id="GO:0060271">
    <property type="term" value="P:cilium assembly"/>
    <property type="evidence" value="ECO:0000315"/>
    <property type="project" value="UniProtKB"/>
</dbReference>
<dbReference type="GO" id="GO:1905515">
    <property type="term" value="P:non-motile cilium assembly"/>
    <property type="evidence" value="ECO:0000316"/>
    <property type="project" value="WormBase"/>
</dbReference>
<dbReference type="InterPro" id="IPR029409">
    <property type="entry name" value="TMEM237"/>
</dbReference>
<dbReference type="PANTHER" id="PTHR28388">
    <property type="entry name" value="TRANSMEMBRANE PROTEIN 237"/>
    <property type="match status" value="1"/>
</dbReference>
<dbReference type="PANTHER" id="PTHR28388:SF1">
    <property type="entry name" value="TRANSMEMBRANE PROTEIN 237"/>
    <property type="match status" value="1"/>
</dbReference>
<dbReference type="Pfam" id="PF15383">
    <property type="entry name" value="TMEM237"/>
    <property type="match status" value="1"/>
</dbReference>
<comment type="function">
    <text evidence="4">Component of the transition zone in primary cilia. Required for ciliogenesis.</text>
</comment>
<comment type="subcellular location">
    <subcellularLocation>
        <location evidence="5">Membrane</location>
        <topology evidence="5">Multi-pass membrane protein</topology>
    </subcellularLocation>
    <subcellularLocation>
        <location evidence="4">Cell projection</location>
        <location evidence="4">Cilium</location>
    </subcellularLocation>
    <text>Localizes the transition zone.</text>
</comment>
<comment type="similarity">
    <text evidence="5">Belongs to the TMEM237 family.</text>
</comment>
<proteinExistence type="inferred from homology"/>
<name>TM237_CAEEL</name>
<sequence>MPPTSRPVPPPPKRRISESSSSSDDELTGNNSFRENQQRRFRENNEVGNISDSDNDEVFSHQESQSVGFIETDEERQREEHAQNSNLRNRRVSYGKIPVPPMSMTVEDIQEAAKHSREDPSGETVEVRRPNDPRRSSVSLDVFKSFRDPHDKRNMPAKDKTIYVEGPNGKFREMKKGKFWNRDKFDSPKKDAEKKQDEDSVIPFLLKAPGQAYRTQRVYNQIANIIQGFLAGISVMLAIFSFNLEPEVLLTGYRYMSLPIHAGFMVAFTVGLVSAIDRTGIYEVEHFTSRTRLTATVYNNGLITFIVWFVGLVSTLLCIQLESQLAFAPTRIPSEDLVHHWRVFNVLRALTSGLGFLLLAFKPDSDTMAKELREAIYEQLELVTSDPERRRVIITAMKI</sequence>
<evidence type="ECO:0000250" key="1">
    <source>
        <dbReference type="UniProtKB" id="Q96Q45"/>
    </source>
</evidence>
<evidence type="ECO:0000255" key="2"/>
<evidence type="ECO:0000256" key="3">
    <source>
        <dbReference type="SAM" id="MobiDB-lite"/>
    </source>
</evidence>
<evidence type="ECO:0000269" key="4">
    <source>
    </source>
</evidence>
<evidence type="ECO:0000305" key="5"/>
<evidence type="ECO:0000312" key="6">
    <source>
        <dbReference type="WormBase" id="F53A9.4"/>
    </source>
</evidence>
<feature type="chain" id="PRO_0000415835" description="Transmembrane protein 237 homolog">
    <location>
        <begin position="1"/>
        <end position="399"/>
    </location>
</feature>
<feature type="transmembrane region" description="Helical" evidence="2">
    <location>
        <begin position="222"/>
        <end position="242"/>
    </location>
</feature>
<feature type="transmembrane region" description="Helical" evidence="2">
    <location>
        <begin position="256"/>
        <end position="276"/>
    </location>
</feature>
<feature type="transmembrane region" description="Helical" evidence="2">
    <location>
        <begin position="301"/>
        <end position="321"/>
    </location>
</feature>
<feature type="transmembrane region" description="Helical" evidence="2">
    <location>
        <begin position="343"/>
        <end position="363"/>
    </location>
</feature>
<feature type="region of interest" description="Disordered" evidence="3">
    <location>
        <begin position="1"/>
        <end position="158"/>
    </location>
</feature>
<feature type="compositionally biased region" description="Pro residues" evidence="3">
    <location>
        <begin position="1"/>
        <end position="11"/>
    </location>
</feature>
<feature type="compositionally biased region" description="Basic and acidic residues" evidence="3">
    <location>
        <begin position="36"/>
        <end position="45"/>
    </location>
</feature>
<feature type="compositionally biased region" description="Basic and acidic residues" evidence="3">
    <location>
        <begin position="111"/>
        <end position="135"/>
    </location>
</feature>
<feature type="compositionally biased region" description="Basic and acidic residues" evidence="3">
    <location>
        <begin position="144"/>
        <end position="158"/>
    </location>
</feature>
<protein>
    <recommendedName>
        <fullName>Transmembrane protein 237 homolog</fullName>
    </recommendedName>
    <alternativeName>
        <fullName evidence="6">Joubert syndrome 14 protein homolog</fullName>
    </alternativeName>
</protein>
<keyword id="KW-0966">Cell projection</keyword>
<keyword id="KW-0969">Cilium</keyword>
<keyword id="KW-0970">Cilium biogenesis/degradation</keyword>
<keyword id="KW-0472">Membrane</keyword>
<keyword id="KW-1185">Reference proteome</keyword>
<keyword id="KW-0812">Transmembrane</keyword>
<keyword id="KW-1133">Transmembrane helix</keyword>
<gene>
    <name evidence="6" type="primary">jbts-14</name>
    <name evidence="1" type="synonym">tmem-237</name>
    <name evidence="6" type="ORF">F53A9.4</name>
</gene>
<organism>
    <name type="scientific">Caenorhabditis elegans</name>
    <dbReference type="NCBI Taxonomy" id="6239"/>
    <lineage>
        <taxon>Eukaryota</taxon>
        <taxon>Metazoa</taxon>
        <taxon>Ecdysozoa</taxon>
        <taxon>Nematoda</taxon>
        <taxon>Chromadorea</taxon>
        <taxon>Rhabditida</taxon>
        <taxon>Rhabditina</taxon>
        <taxon>Rhabditomorpha</taxon>
        <taxon>Rhabditoidea</taxon>
        <taxon>Rhabditidae</taxon>
        <taxon>Peloderinae</taxon>
        <taxon>Caenorhabditis</taxon>
    </lineage>
</organism>
<reference key="1">
    <citation type="journal article" date="1998" name="Science">
        <title>Genome sequence of the nematode C. elegans: a platform for investigating biology.</title>
        <authorList>
            <consortium name="The C. elegans sequencing consortium"/>
        </authorList>
    </citation>
    <scope>NUCLEOTIDE SEQUENCE [LARGE SCALE GENOMIC DNA]</scope>
    <source>
        <strain>Bristol N2</strain>
    </source>
</reference>
<reference key="2">
    <citation type="journal article" date="2011" name="Am. J. Hum. Genet.">
        <title>TMEM237 is mutated in individuals with a Joubert syndrome related disorder and expands the role of the TMEM family at the ciliary transition zone.</title>
        <authorList>
            <person name="Huang L."/>
            <person name="Szymanska K."/>
            <person name="Jensen V.L."/>
            <person name="Janecke A.R."/>
            <person name="Innes A.M."/>
            <person name="Davis E.E."/>
            <person name="Frosk P."/>
            <person name="Li C."/>
            <person name="Willer J.R."/>
            <person name="Chodirker B.N."/>
            <person name="Greenberg C.R."/>
            <person name="McLeod D.R."/>
            <person name="Bernier F.P."/>
            <person name="Chudley A.E."/>
            <person name="Muller T."/>
            <person name="Shboul M."/>
            <person name="Logan C.V."/>
            <person name="Loucks C.M."/>
            <person name="Beaulieu C.L."/>
            <person name="Bowie R.V."/>
            <person name="Bell S.M."/>
            <person name="Adkins J."/>
            <person name="Zuniga F.I."/>
            <person name="Ross K.D."/>
            <person name="Wang J."/>
            <person name="Ban M.R."/>
            <person name="Becker C."/>
            <person name="Nurnberg P."/>
            <person name="Douglas S."/>
            <person name="Craft C.M."/>
            <person name="Akimenko M.A."/>
            <person name="Hegele R.A."/>
            <person name="Ober C."/>
            <person name="Utermann G."/>
            <person name="Bolz H.J."/>
            <person name="Bulman D.E."/>
            <person name="Katsanis N."/>
            <person name="Blacque O.E."/>
            <person name="Doherty D."/>
            <person name="Parboosingh J.S."/>
            <person name="Leroux M.R."/>
            <person name="Johnson C.A."/>
            <person name="Boycott K.M."/>
        </authorList>
    </citation>
    <scope>FUNCTION</scope>
    <scope>SUBCELLULAR LOCATION</scope>
</reference>
<accession>Q20687</accession>